<name>ENTH_ECOLI</name>
<gene>
    <name evidence="1 8" type="primary">entH</name>
    <name type="synonym">ybdB</name>
    <name type="ordered locus">b0597</name>
    <name type="ordered locus">JW0589</name>
</gene>
<proteinExistence type="evidence at protein level"/>
<feature type="chain" id="PRO_0000156676" description="Proofreading thioesterase EntH">
    <location>
        <begin position="1"/>
        <end position="137"/>
    </location>
</feature>
<feature type="active site" description="Nucleophile or proton acceptor" evidence="1 9 10">
    <location>
        <position position="63"/>
    </location>
</feature>
<feature type="binding site" evidence="7">
    <location>
        <position position="48"/>
    </location>
    <ligand>
        <name>substrate</name>
    </ligand>
</feature>
<feature type="binding site" evidence="7">
    <location>
        <begin position="54"/>
        <end position="55"/>
    </location>
    <ligand>
        <name>substrate</name>
    </ligand>
</feature>
<feature type="binding site" evidence="7">
    <location>
        <position position="82"/>
    </location>
    <ligand>
        <name>substrate</name>
    </ligand>
</feature>
<feature type="binding site" evidence="7">
    <location>
        <begin position="89"/>
        <end position="92"/>
    </location>
    <ligand>
        <name>substrate</name>
    </ligand>
</feature>
<feature type="mutagenesis site" description="Loss of activity." evidence="5 7">
    <original>Q</original>
    <variation>A</variation>
    <location>
        <position position="48"/>
    </location>
</feature>
<feature type="mutagenesis site" description="290-fold decrease in activity toward salicylyl-CoA." evidence="5">
    <original>Q</original>
    <variation>N</variation>
    <location>
        <position position="48"/>
    </location>
</feature>
<feature type="mutagenesis site" description="229-fold decrease in activity toward salicylyl-CoA. Loss of activity toward benzoyl-CoA." evidence="5 7">
    <original>H</original>
    <variation>A</variation>
    <location>
        <position position="54"/>
    </location>
</feature>
<feature type="mutagenesis site" description="Loss of activity." evidence="5 7">
    <original>E</original>
    <variation>A</variation>
    <variation>D</variation>
    <variation>Q</variation>
    <location>
        <position position="63"/>
    </location>
</feature>
<feature type="mutagenesis site" description="13-fold decrease in activity toward salicylyl-CoA." evidence="5">
    <original>T</original>
    <variation>S</variation>
    <location>
        <position position="64"/>
    </location>
</feature>
<feature type="mutagenesis site" description="140-fold decrease in activity toward salicylyl-CoA." evidence="5">
    <original>S</original>
    <variation>A</variation>
    <location>
        <position position="67"/>
    </location>
</feature>
<feature type="mutagenesis site" description="104-fold decrease in activity toward salicylyl-CoA." evidence="5">
    <original>S</original>
    <variation>C</variation>
    <location>
        <position position="67"/>
    </location>
</feature>
<feature type="mutagenesis site" description="130-fold decrease in activity toward salicylyl-CoA." evidence="5">
    <original>M</original>
    <variation>A</variation>
    <location>
        <position position="68"/>
    </location>
</feature>
<feature type="mutagenesis site" description="47-fold increase in catalytic efficiency toward 1,4-dihydroxy-2-naphthoyl-CoA and 10-fold increase in catalytic efficiency toward lauroyl-CoA. Does not affect catalytic efficiency toward benzoyl-CoA." evidence="6 7">
    <original>M</original>
    <variation>V</variation>
    <location>
        <position position="68"/>
    </location>
</feature>
<feature type="helix" evidence="11">
    <location>
        <begin position="9"/>
        <end position="14"/>
    </location>
</feature>
<feature type="turn" evidence="11">
    <location>
        <begin position="15"/>
        <end position="18"/>
    </location>
</feature>
<feature type="helix" evidence="11">
    <location>
        <begin position="20"/>
        <end position="23"/>
    </location>
</feature>
<feature type="strand" evidence="11">
    <location>
        <begin position="27"/>
        <end position="31"/>
    </location>
</feature>
<feature type="strand" evidence="11">
    <location>
        <begin position="36"/>
        <end position="41"/>
    </location>
</feature>
<feature type="turn" evidence="11">
    <location>
        <begin position="44"/>
        <end position="46"/>
    </location>
</feature>
<feature type="strand" evidence="11">
    <location>
        <begin position="51"/>
        <end position="53"/>
    </location>
</feature>
<feature type="helix" evidence="11">
    <location>
        <begin position="55"/>
        <end position="71"/>
    </location>
</feature>
<feature type="strand" evidence="11">
    <location>
        <begin position="79"/>
        <end position="89"/>
    </location>
</feature>
<feature type="strand" evidence="11">
    <location>
        <begin position="95"/>
        <end position="107"/>
    </location>
</feature>
<feature type="strand" evidence="11">
    <location>
        <begin position="109"/>
        <end position="119"/>
    </location>
</feature>
<feature type="strand" evidence="11">
    <location>
        <begin position="125"/>
        <end position="136"/>
    </location>
</feature>
<dbReference type="EC" id="3.1.2.-" evidence="1"/>
<dbReference type="EMBL" id="M24148">
    <property type="protein sequence ID" value="AAA16104.1"/>
    <property type="molecule type" value="Unassigned_DNA"/>
</dbReference>
<dbReference type="EMBL" id="M24143">
    <property type="protein sequence ID" value="AAA76837.1"/>
    <property type="molecule type" value="Genomic_DNA"/>
</dbReference>
<dbReference type="EMBL" id="U82598">
    <property type="protein sequence ID" value="AAB40797.1"/>
    <property type="molecule type" value="Genomic_DNA"/>
</dbReference>
<dbReference type="EMBL" id="U00096">
    <property type="protein sequence ID" value="AAC73698.1"/>
    <property type="molecule type" value="Genomic_DNA"/>
</dbReference>
<dbReference type="EMBL" id="AP009048">
    <property type="protein sequence ID" value="BAE76352.1"/>
    <property type="molecule type" value="Genomic_DNA"/>
</dbReference>
<dbReference type="PIR" id="B91904">
    <property type="entry name" value="Q3ECEA"/>
</dbReference>
<dbReference type="RefSeq" id="NP_415129.1">
    <property type="nucleotide sequence ID" value="NC_000913.3"/>
</dbReference>
<dbReference type="RefSeq" id="WP_000637953.1">
    <property type="nucleotide sequence ID" value="NZ_STEB01000047.1"/>
</dbReference>
<dbReference type="PDB" id="1VH9">
    <property type="method" value="X-ray"/>
    <property type="resolution" value="2.15 A"/>
    <property type="chains" value="A/B=2-137"/>
</dbReference>
<dbReference type="PDB" id="4K4C">
    <property type="method" value="X-ray"/>
    <property type="resolution" value="1.85 A"/>
    <property type="chains" value="A/B/C/D=1-137"/>
</dbReference>
<dbReference type="PDB" id="4K4D">
    <property type="method" value="X-ray"/>
    <property type="resolution" value="2.17 A"/>
    <property type="chains" value="A/B=1-137"/>
</dbReference>
<dbReference type="PDBsum" id="1VH9"/>
<dbReference type="PDBsum" id="4K4C"/>
<dbReference type="PDBsum" id="4K4D"/>
<dbReference type="SMR" id="P0A8Y8"/>
<dbReference type="BioGRID" id="4260982">
    <property type="interactions" value="16"/>
</dbReference>
<dbReference type="DIP" id="DIP-11343N"/>
<dbReference type="FunCoup" id="P0A8Y8">
    <property type="interactions" value="93"/>
</dbReference>
<dbReference type="IntAct" id="P0A8Y8">
    <property type="interactions" value="2"/>
</dbReference>
<dbReference type="STRING" id="511145.b0597"/>
<dbReference type="PaxDb" id="511145-b0597"/>
<dbReference type="EnsemblBacteria" id="AAC73698">
    <property type="protein sequence ID" value="AAC73698"/>
    <property type="gene ID" value="b0597"/>
</dbReference>
<dbReference type="GeneID" id="86863118"/>
<dbReference type="GeneID" id="945215"/>
<dbReference type="KEGG" id="ecj:JW0589"/>
<dbReference type="KEGG" id="eco:b0597"/>
<dbReference type="KEGG" id="ecoc:C3026_02980"/>
<dbReference type="PATRIC" id="fig|1411691.4.peg.1672"/>
<dbReference type="EchoBASE" id="EB1097"/>
<dbReference type="eggNOG" id="COG2050">
    <property type="taxonomic scope" value="Bacteria"/>
</dbReference>
<dbReference type="HOGENOM" id="CLU_089876_13_1_6"/>
<dbReference type="InParanoid" id="P0A8Y8"/>
<dbReference type="OMA" id="QHGGVYC"/>
<dbReference type="OrthoDB" id="9798208at2"/>
<dbReference type="PhylomeDB" id="P0A8Y8"/>
<dbReference type="BioCyc" id="EcoCyc:EG11105-MONOMER"/>
<dbReference type="BioCyc" id="MetaCyc:EG11105-MONOMER"/>
<dbReference type="BRENDA" id="3.1.2.2">
    <property type="organism ID" value="2026"/>
</dbReference>
<dbReference type="BRENDA" id="3.1.2.28">
    <property type="organism ID" value="2026"/>
</dbReference>
<dbReference type="SABIO-RK" id="P0A8Y8"/>
<dbReference type="UniPathway" id="UPA00017"/>
<dbReference type="EvolutionaryTrace" id="P0A8Y8"/>
<dbReference type="PRO" id="PR:P0A8Y8"/>
<dbReference type="Proteomes" id="UP000000625">
    <property type="component" value="Chromosome"/>
</dbReference>
<dbReference type="GO" id="GO:0005829">
    <property type="term" value="C:cytosol"/>
    <property type="evidence" value="ECO:0000314"/>
    <property type="project" value="EcoCyc"/>
</dbReference>
<dbReference type="GO" id="GO:0061522">
    <property type="term" value="F:1,4-dihydroxy-2-naphthoyl-CoA thioesterase activity"/>
    <property type="evidence" value="ECO:0000318"/>
    <property type="project" value="GO_Central"/>
</dbReference>
<dbReference type="GO" id="GO:0016289">
    <property type="term" value="F:acyl-CoA hydrolase activity"/>
    <property type="evidence" value="ECO:0000314"/>
    <property type="project" value="EcoCyc"/>
</dbReference>
<dbReference type="GO" id="GO:0016788">
    <property type="term" value="F:hydrolase activity, acting on ester bonds"/>
    <property type="evidence" value="ECO:0000314"/>
    <property type="project" value="EcoCyc"/>
</dbReference>
<dbReference type="GO" id="GO:0042802">
    <property type="term" value="F:identical protein binding"/>
    <property type="evidence" value="ECO:0000314"/>
    <property type="project" value="EcoCyc"/>
</dbReference>
<dbReference type="GO" id="GO:0016790">
    <property type="term" value="F:thiolester hydrolase activity"/>
    <property type="evidence" value="ECO:0000314"/>
    <property type="project" value="EcoCyc"/>
</dbReference>
<dbReference type="GO" id="GO:0009239">
    <property type="term" value="P:enterobactin biosynthetic process"/>
    <property type="evidence" value="ECO:0000315"/>
    <property type="project" value="EcoCyc"/>
</dbReference>
<dbReference type="CDD" id="cd03443">
    <property type="entry name" value="PaaI_thioesterase"/>
    <property type="match status" value="1"/>
</dbReference>
<dbReference type="FunFam" id="3.10.129.10:FF:000002">
    <property type="entry name" value="1,4-dihydroxy-2-naphthoyl-CoA hydrolase"/>
    <property type="match status" value="1"/>
</dbReference>
<dbReference type="Gene3D" id="3.10.129.10">
    <property type="entry name" value="Hotdog Thioesterase"/>
    <property type="match status" value="1"/>
</dbReference>
<dbReference type="HAMAP" id="MF_00907">
    <property type="entry name" value="Thioesterase_EntH"/>
    <property type="match status" value="1"/>
</dbReference>
<dbReference type="InterPro" id="IPR029069">
    <property type="entry name" value="HotDog_dom_sf"/>
</dbReference>
<dbReference type="InterPro" id="IPR003736">
    <property type="entry name" value="PAAI_dom"/>
</dbReference>
<dbReference type="InterPro" id="IPR026576">
    <property type="entry name" value="Thioesterase_EntH"/>
</dbReference>
<dbReference type="InterPro" id="IPR006683">
    <property type="entry name" value="Thioestr_dom"/>
</dbReference>
<dbReference type="NCBIfam" id="NF007607">
    <property type="entry name" value="PRK10254.1"/>
    <property type="match status" value="1"/>
</dbReference>
<dbReference type="NCBIfam" id="TIGR00369">
    <property type="entry name" value="unchar_dom_1"/>
    <property type="match status" value="1"/>
</dbReference>
<dbReference type="PANTHER" id="PTHR43240">
    <property type="entry name" value="1,4-DIHYDROXY-2-NAPHTHOYL-COA THIOESTERASE 1"/>
    <property type="match status" value="1"/>
</dbReference>
<dbReference type="PANTHER" id="PTHR43240:SF9">
    <property type="entry name" value="PROOFREADING THIOESTERASE ENTH"/>
    <property type="match status" value="1"/>
</dbReference>
<dbReference type="Pfam" id="PF03061">
    <property type="entry name" value="4HBT"/>
    <property type="match status" value="1"/>
</dbReference>
<dbReference type="SUPFAM" id="SSF54637">
    <property type="entry name" value="Thioesterase/thiol ester dehydrase-isomerase"/>
    <property type="match status" value="1"/>
</dbReference>
<keyword id="KW-0002">3D-structure</keyword>
<keyword id="KW-0963">Cytoplasm</keyword>
<keyword id="KW-0378">Hydrolase</keyword>
<keyword id="KW-1185">Reference proteome</keyword>
<evidence type="ECO:0000255" key="1">
    <source>
        <dbReference type="HAMAP-Rule" id="MF_00907"/>
    </source>
</evidence>
<evidence type="ECO:0000269" key="2">
    <source>
    </source>
</evidence>
<evidence type="ECO:0000269" key="3">
    <source>
    </source>
</evidence>
<evidence type="ECO:0000269" key="4">
    <source>
    </source>
</evidence>
<evidence type="ECO:0000269" key="5">
    <source>
    </source>
</evidence>
<evidence type="ECO:0000269" key="6">
    <source>
    </source>
</evidence>
<evidence type="ECO:0000269" key="7">
    <source>
    </source>
</evidence>
<evidence type="ECO:0000303" key="8">
    <source>
    </source>
</evidence>
<evidence type="ECO:0000303" key="9">
    <source>
    </source>
</evidence>
<evidence type="ECO:0000305" key="10">
    <source>
    </source>
</evidence>
<evidence type="ECO:0007829" key="11">
    <source>
        <dbReference type="PDB" id="4K4C"/>
    </source>
</evidence>
<comment type="function">
    <text evidence="2 3 4 5 6">Required for optimal enterobactin synthesis. Acts as a proofreading enzyme that prevents EntB misacylation by hydrolyzing the thioester bound existing between EntB and wrongly charged molecules. Displays esterase activity toward a wide range of substrates, including acyl-CoAs and aryl-CoAs.</text>
</comment>
<comment type="biophysicochemical properties">
    <kinetics>
        <KM evidence="4">16 uM for 2,3-DHB-EntB</KM>
        <KM evidence="5">116 uM for 2,3-DHB-EntB</KM>
        <KM evidence="4">21 uM for 4-hydroxybenzoyl-CoA</KM>
        <KM evidence="5">190 uM for 4-hydroxybenzoyl-CoA</KM>
        <KM evidence="4">25 uM for 2,4-DHB-EntB</KM>
        <KM evidence="4">32 uM for lauroyl-EntB</KM>
        <KM evidence="4">35 uM for 3-hydroxybenzoyl-CoA</KM>
        <KM evidence="5">265 uM for 3-hydroxybenzoyl-CoA</KM>
        <KM evidence="4">37 uM for 3-HPA-CoA</KM>
        <KM evidence="4">45 uM for lauroyl-CoA</KM>
        <KM evidence="4">49 uM for decanoyl-CoA</KM>
        <KM evidence="4">55 uM for palmitoyl-CoA</KM>
        <KM evidence="5">4.25 uM for palmitoyl-CoA</KM>
        <KM evidence="5">161 uM for 2,3-dihydroxybenzoyl-CoA</KM>
        <KM evidence="5">176 uM for salicylyl-CoA</KM>
        <KM evidence="5">212 uM for 3,4-dihydroxybenzoyl-CoA</KM>
        <KM evidence="5">219 uM for 2,4-dihydroxybenzoyl-CoA</KM>
        <KM evidence="5">256 uM for 3,5-dihydroxybenzoyl-CoA</KM>
        <KM evidence="5">272 uM for salicylyl-EntB</KM>
        <KM evidence="4">350 uM for hexanoyl-CoA</KM>
        <KM evidence="4">400 uM for propionyl-CoA</KM>
        <KM evidence="5">475 uM for benzoyl-CoA</KM>
        <KM evidence="4">800 uM for acetyl-CoA</KM>
    </kinetics>
</comment>
<comment type="pathway">
    <text evidence="1 3">Siderophore biosynthesis; enterobactin biosynthesis.</text>
</comment>
<comment type="subunit">
    <text evidence="1 3 5 7">Homotetramer. Dimer of dimers. Interacts specifically with the aryl carrier protein (ArCP) domain of EntB.</text>
</comment>
<comment type="interaction">
    <interactant intactId="EBI-1118982">
        <id>P0A8Y8</id>
    </interactant>
    <interactant intactId="EBI-547993">
        <id>P0ADI4</id>
        <label>entB</label>
    </interactant>
    <organismsDiffer>false</organismsDiffer>
    <experiments>3</experiments>
</comment>
<comment type="subcellular location">
    <subcellularLocation>
        <location evidence="1 3">Cytoplasm</location>
    </subcellularLocation>
</comment>
<comment type="induction">
    <text evidence="3">Induced by iron starvation.</text>
</comment>
<comment type="similarity">
    <text evidence="1">Belongs to the thioesterase PaaI family.</text>
</comment>
<accession>P0A8Y8</accession>
<accession>P15050</accession>
<accession>Q2MBK4</accession>
<protein>
    <recommendedName>
        <fullName evidence="1">Proofreading thioesterase EntH</fullName>
        <ecNumber evidence="1">3.1.2.-</ecNumber>
    </recommendedName>
    <alternativeName>
        <fullName evidence="1">Enterobactin synthase component H</fullName>
    </alternativeName>
    <alternativeName>
        <fullName>p15</fullName>
    </alternativeName>
</protein>
<organism>
    <name type="scientific">Escherichia coli (strain K12)</name>
    <dbReference type="NCBI Taxonomy" id="83333"/>
    <lineage>
        <taxon>Bacteria</taxon>
        <taxon>Pseudomonadati</taxon>
        <taxon>Pseudomonadota</taxon>
        <taxon>Gammaproteobacteria</taxon>
        <taxon>Enterobacterales</taxon>
        <taxon>Enterobacteriaceae</taxon>
        <taxon>Escherichia</taxon>
    </lineage>
</organism>
<sequence>MIWKRHLTLDELNATSDNTMVAHLGIVYTRLGDDVLEAEMPVDTRTHQPFGLLHGGASAALAETLGSMAGFMMTRDGQCVVGTELNATHHRPVSEGKVRGVCQPLHLGRQNQSWEIVVFDEQGRRCCTCRLGTAVLG</sequence>
<reference key="1">
    <citation type="journal article" date="1989" name="J. Bacteriol.">
        <title>Nucleotide sequence and transcriptional organization of the Escherichia coli enterobactin biosynthesis cistrons entB and entA.</title>
        <authorList>
            <person name="Nahlik M.S."/>
            <person name="Brickman T.J."/>
            <person name="Ozenberger B.A."/>
            <person name="McIntosh M.A."/>
        </authorList>
    </citation>
    <scope>NUCLEOTIDE SEQUENCE [GENOMIC DNA]</scope>
</reference>
<reference key="2">
    <citation type="journal article" date="1989" name="J. Bacteriol.">
        <title>Nucleotide sequence of a cluster of Escherichia coli enterobactin biosynthesis genes: identification of entA and purification of its product 2,3-dihydro-2,3-dihydroxybenzoate dehydrogenase.</title>
        <authorList>
            <person name="Liu J."/>
            <person name="Duncan K."/>
            <person name="Walsh C.T."/>
        </authorList>
    </citation>
    <scope>NUCLEOTIDE SEQUENCE [GENOMIC DNA]</scope>
</reference>
<reference key="3">
    <citation type="submission" date="1997-01" db="EMBL/GenBank/DDBJ databases">
        <title>Sequence of minutes 4-25 of Escherichia coli.</title>
        <authorList>
            <person name="Chung E."/>
            <person name="Allen E."/>
            <person name="Araujo R."/>
            <person name="Aparicio A.M."/>
            <person name="Davis K."/>
            <person name="Duncan M."/>
            <person name="Federspiel N."/>
            <person name="Hyman R."/>
            <person name="Kalman S."/>
            <person name="Komp C."/>
            <person name="Kurdi O."/>
            <person name="Lew H."/>
            <person name="Lin D."/>
            <person name="Namath A."/>
            <person name="Oefner P."/>
            <person name="Roberts D."/>
            <person name="Schramm S."/>
            <person name="Davis R.W."/>
        </authorList>
    </citation>
    <scope>NUCLEOTIDE SEQUENCE [LARGE SCALE GENOMIC DNA]</scope>
    <source>
        <strain>K12 / MG1655 / ATCC 47076</strain>
    </source>
</reference>
<reference key="4">
    <citation type="journal article" date="1997" name="Science">
        <title>The complete genome sequence of Escherichia coli K-12.</title>
        <authorList>
            <person name="Blattner F.R."/>
            <person name="Plunkett G. III"/>
            <person name="Bloch C.A."/>
            <person name="Perna N.T."/>
            <person name="Burland V."/>
            <person name="Riley M."/>
            <person name="Collado-Vides J."/>
            <person name="Glasner J.D."/>
            <person name="Rode C.K."/>
            <person name="Mayhew G.F."/>
            <person name="Gregor J."/>
            <person name="Davis N.W."/>
            <person name="Kirkpatrick H.A."/>
            <person name="Goeden M.A."/>
            <person name="Rose D.J."/>
            <person name="Mau B."/>
            <person name="Shao Y."/>
        </authorList>
    </citation>
    <scope>NUCLEOTIDE SEQUENCE [LARGE SCALE GENOMIC DNA]</scope>
    <source>
        <strain>K12 / MG1655 / ATCC 47076</strain>
    </source>
</reference>
<reference key="5">
    <citation type="journal article" date="2006" name="Mol. Syst. Biol.">
        <title>Highly accurate genome sequences of Escherichia coli K-12 strains MG1655 and W3110.</title>
        <authorList>
            <person name="Hayashi K."/>
            <person name="Morooka N."/>
            <person name="Yamamoto Y."/>
            <person name="Fujita K."/>
            <person name="Isono K."/>
            <person name="Choi S."/>
            <person name="Ohtsubo E."/>
            <person name="Baba T."/>
            <person name="Wanner B.L."/>
            <person name="Mori H."/>
            <person name="Horiuchi T."/>
        </authorList>
    </citation>
    <scope>NUCLEOTIDE SEQUENCE [LARGE SCALE GENOMIC DNA]</scope>
    <source>
        <strain>K12 / W3110 / ATCC 27325 / DSM 5911</strain>
    </source>
</reference>
<reference key="6">
    <citation type="journal article" date="2005" name="FEMS Microbiol. Rev.">
        <title>Enzyme genomics: application of general enzymatic screens to discover new enzymes.</title>
        <authorList>
            <person name="Kuznetsova E."/>
            <person name="Proudfoot M."/>
            <person name="Sanders S.A."/>
            <person name="Reinking J."/>
            <person name="Savchenko A."/>
            <person name="Arrowsmith C.H."/>
            <person name="Edwards A.M."/>
            <person name="Yakunin A.F."/>
        </authorList>
    </citation>
    <scope>FUNCTION AS AN ESTERASE</scope>
</reference>
<reference key="7">
    <citation type="journal article" date="2007" name="J. Bacteriol.">
        <title>The hotdog thioesterase EntH (YbdB) plays a role in vivo in optimal enterobactin biosynthesis by interacting with the ArCP domain of EntB.</title>
        <authorList>
            <person name="Leduc D."/>
            <person name="Battesti A."/>
            <person name="Bouveret E."/>
        </authorList>
    </citation>
    <scope>FUNCTION</scope>
    <scope>BIOPHYSICOCHEMICAL PROPERTIES</scope>
    <scope>PATHWAY</scope>
    <scope>INTERACTION WITH ENTB</scope>
    <scope>SUBCELLULAR LOCATION</scope>
    <scope>INDUCTION</scope>
    <scope>GENE NAME</scope>
    <source>
        <strain>K12</strain>
    </source>
</reference>
<reference key="8">
    <citation type="journal article" date="2009" name="Biochemistry">
        <title>In vitro kinetic analysis of substrate specificity in enterobactin biosynthetic lower pathway enzymes provides insight into the biochemical function of the hot dog-fold thioesterase EntH.</title>
        <authorList>
            <person name="Chen D."/>
            <person name="Wu R."/>
            <person name="Bryan T.L."/>
            <person name="Dunaway-Mariano D."/>
        </authorList>
    </citation>
    <scope>FUNCTION AS AN ESTERASE</scope>
    <scope>BIOPHYSICOCHEMICAL PROPERTIES</scope>
</reference>
<reference key="9">
    <citation type="journal article" date="2009" name="Biochemistry">
        <title>Preferential hydrolysis of aberrant intermediates by the type II thioesterase in Escherichia coli nonribosomal enterobactin synthesis: substrate specificities and mutagenic studies on the active-site residues.</title>
        <authorList>
            <person name="Guo Z.F."/>
            <person name="Sun Y."/>
            <person name="Zheng S."/>
            <person name="Guo Z."/>
        </authorList>
    </citation>
    <scope>FUNCTION</scope>
    <scope>BIOPHYSICOCHEMICAL PROPERTIES</scope>
    <scope>SUBUNIT</scope>
    <scope>ACTIVE SITE</scope>
    <scope>MUTAGENESIS OF GLN-48; HIS-54; GLU-63; THR-64; SER-67 AND MET-68</scope>
    <source>
        <strain>K12</strain>
    </source>
</reference>
<reference key="10">
    <citation type="journal article" date="2014" name="Biochemistry">
        <title>Divergence of substrate specificity and function in the Escherichia coli hotdog-fold thioesterase paralogs YdiI and YbdB.</title>
        <authorList>
            <person name="Latham J.A."/>
            <person name="Chen D."/>
            <person name="Allen K.N."/>
            <person name="Dunaway-Mariano D."/>
        </authorList>
    </citation>
    <scope>FUNCTION</scope>
    <scope>MUTAGENESIS OF MET-68</scope>
</reference>
<reference key="11">
    <citation type="submission" date="2003-12" db="PDB data bank">
        <title>Crystal structure of a putative thioesterase.</title>
        <authorList>
            <person name="Murshudov G.N."/>
            <person name="Vagin A.A."/>
            <person name="Dodson E.J."/>
        </authorList>
    </citation>
    <scope>X-RAY CRYSTALLOGRAPHY (2.15 ANGSTROMS) OF 2-137</scope>
</reference>
<reference key="12">
    <citation type="journal article" date="2014" name="Biochemistry">
        <title>Structure and catalysis in the Escherichia coli hotdog-fold thioesterase paralogs YdiI and YbdB.</title>
        <authorList>
            <person name="Wu R."/>
            <person name="Latham J.A."/>
            <person name="Chen D."/>
            <person name="Farelli J."/>
            <person name="Zhao H."/>
            <person name="Matthews K."/>
            <person name="Allen K.N."/>
            <person name="Dunaway-Mariano D."/>
        </authorList>
    </citation>
    <scope>X-RAY CRYSTALLOGRAPHY (1.85 ANGSTROMS) IN COMPLEXES WITH SUBSTRATE ANALOGS</scope>
    <scope>SUBUNIT</scope>
    <scope>MUTAGENESIS OF GLN-48; HIS-54; GLU-63 AND MET-68</scope>
    <scope>ACTIVE SITE</scope>
</reference>